<evidence type="ECO:0000255" key="1">
    <source>
        <dbReference type="HAMAP-Rule" id="MF_01398"/>
    </source>
</evidence>
<protein>
    <recommendedName>
        <fullName evidence="1">ATP synthase subunit b</fullName>
    </recommendedName>
    <alternativeName>
        <fullName evidence="1">ATP synthase F(0) sector subunit b</fullName>
    </alternativeName>
    <alternativeName>
        <fullName evidence="1">ATPase subunit I</fullName>
    </alternativeName>
    <alternativeName>
        <fullName evidence="1">F-type ATPase subunit b</fullName>
        <shortName evidence="1">F-ATPase subunit b</shortName>
    </alternativeName>
</protein>
<proteinExistence type="inferred from homology"/>
<sequence length="175" mass="19186">MFLAAEGSHNPILPIWQELVVGTIAFALLVFVLLKFVMPRMETMYQARVDAIEGGLKRAEAAQAEANQLLEQYRAQLAEVRTEAARIRDDARADAEGIRQDILAKAREESDRIIAAGKEQLVAERTTIVRELRTEVGTLAVDLAGKIVGESLADEARRAGTVDRFLNGLESAGAR</sequence>
<keyword id="KW-0066">ATP synthesis</keyword>
<keyword id="KW-1003">Cell membrane</keyword>
<keyword id="KW-0138">CF(0)</keyword>
<keyword id="KW-0375">Hydrogen ion transport</keyword>
<keyword id="KW-0406">Ion transport</keyword>
<keyword id="KW-0472">Membrane</keyword>
<keyword id="KW-1185">Reference proteome</keyword>
<keyword id="KW-0812">Transmembrane</keyword>
<keyword id="KW-1133">Transmembrane helix</keyword>
<keyword id="KW-0813">Transport</keyword>
<comment type="function">
    <text evidence="1">F(1)F(0) ATP synthase produces ATP from ADP in the presence of a proton or sodium gradient. F-type ATPases consist of two structural domains, F(1) containing the extramembraneous catalytic core and F(0) containing the membrane proton channel, linked together by a central stalk and a peripheral stalk. During catalysis, ATP synthesis in the catalytic domain of F(1) is coupled via a rotary mechanism of the central stalk subunits to proton translocation.</text>
</comment>
<comment type="function">
    <text evidence="1">Component of the F(0) channel, it forms part of the peripheral stalk, linking F(1) to F(0).</text>
</comment>
<comment type="subunit">
    <text evidence="1">F-type ATPases have 2 components, F(1) - the catalytic core - and F(0) - the membrane proton channel. F(1) has five subunits: alpha(3), beta(3), gamma(1), delta(1), epsilon(1). F(0) has three main subunits: a(1), b(2) and c(10-14). The alpha and beta chains form an alternating ring which encloses part of the gamma chain. F(1) is attached to F(0) by a central stalk formed by the gamma and epsilon chains, while a peripheral stalk is formed by the delta and b chains.</text>
</comment>
<comment type="subcellular location">
    <subcellularLocation>
        <location evidence="1">Cell membrane</location>
        <topology evidence="1">Single-pass membrane protein</topology>
    </subcellularLocation>
</comment>
<comment type="similarity">
    <text evidence="1">Belongs to the ATPase B chain family.</text>
</comment>
<name>ATPF_SALTO</name>
<gene>
    <name evidence="1" type="primary">atpF</name>
    <name type="ordered locus">Strop_3634</name>
</gene>
<dbReference type="EMBL" id="CP000667">
    <property type="protein sequence ID" value="ABP56065.1"/>
    <property type="molecule type" value="Genomic_DNA"/>
</dbReference>
<dbReference type="RefSeq" id="WP_012014840.1">
    <property type="nucleotide sequence ID" value="NC_009380.1"/>
</dbReference>
<dbReference type="SMR" id="A4XAW6"/>
<dbReference type="STRING" id="369723.Strop_3634"/>
<dbReference type="KEGG" id="stp:Strop_3634"/>
<dbReference type="PATRIC" id="fig|369723.5.peg.3749"/>
<dbReference type="eggNOG" id="COG0711">
    <property type="taxonomic scope" value="Bacteria"/>
</dbReference>
<dbReference type="HOGENOM" id="CLU_079215_5_1_11"/>
<dbReference type="Proteomes" id="UP000000235">
    <property type="component" value="Chromosome"/>
</dbReference>
<dbReference type="GO" id="GO:0005886">
    <property type="term" value="C:plasma membrane"/>
    <property type="evidence" value="ECO:0007669"/>
    <property type="project" value="UniProtKB-SubCell"/>
</dbReference>
<dbReference type="GO" id="GO:0045259">
    <property type="term" value="C:proton-transporting ATP synthase complex"/>
    <property type="evidence" value="ECO:0007669"/>
    <property type="project" value="UniProtKB-KW"/>
</dbReference>
<dbReference type="GO" id="GO:0046933">
    <property type="term" value="F:proton-transporting ATP synthase activity, rotational mechanism"/>
    <property type="evidence" value="ECO:0007669"/>
    <property type="project" value="UniProtKB-UniRule"/>
</dbReference>
<dbReference type="GO" id="GO:0046961">
    <property type="term" value="F:proton-transporting ATPase activity, rotational mechanism"/>
    <property type="evidence" value="ECO:0007669"/>
    <property type="project" value="TreeGrafter"/>
</dbReference>
<dbReference type="CDD" id="cd06503">
    <property type="entry name" value="ATP-synt_Fo_b"/>
    <property type="match status" value="1"/>
</dbReference>
<dbReference type="Gene3D" id="1.20.5.620">
    <property type="entry name" value="F1F0 ATP synthase subunit B, membrane domain"/>
    <property type="match status" value="1"/>
</dbReference>
<dbReference type="HAMAP" id="MF_01398">
    <property type="entry name" value="ATP_synth_b_bprime"/>
    <property type="match status" value="1"/>
</dbReference>
<dbReference type="InterPro" id="IPR028987">
    <property type="entry name" value="ATP_synth_B-like_membr_sf"/>
</dbReference>
<dbReference type="InterPro" id="IPR002146">
    <property type="entry name" value="ATP_synth_b/b'su_bac/chlpt"/>
</dbReference>
<dbReference type="InterPro" id="IPR005864">
    <property type="entry name" value="ATP_synth_F0_bsu_bac"/>
</dbReference>
<dbReference type="InterPro" id="IPR050059">
    <property type="entry name" value="ATP_synthase_B_chain"/>
</dbReference>
<dbReference type="NCBIfam" id="TIGR01144">
    <property type="entry name" value="ATP_synt_b"/>
    <property type="match status" value="1"/>
</dbReference>
<dbReference type="NCBIfam" id="NF004412">
    <property type="entry name" value="PRK05759.1-3"/>
    <property type="match status" value="1"/>
</dbReference>
<dbReference type="PANTHER" id="PTHR33445:SF1">
    <property type="entry name" value="ATP SYNTHASE SUBUNIT B"/>
    <property type="match status" value="1"/>
</dbReference>
<dbReference type="PANTHER" id="PTHR33445">
    <property type="entry name" value="ATP SYNTHASE SUBUNIT B', CHLOROPLASTIC"/>
    <property type="match status" value="1"/>
</dbReference>
<dbReference type="Pfam" id="PF00430">
    <property type="entry name" value="ATP-synt_B"/>
    <property type="match status" value="1"/>
</dbReference>
<dbReference type="SUPFAM" id="SSF81573">
    <property type="entry name" value="F1F0 ATP synthase subunit B, membrane domain"/>
    <property type="match status" value="1"/>
</dbReference>
<reference key="1">
    <citation type="journal article" date="2007" name="Proc. Natl. Acad. Sci. U.S.A.">
        <title>Genome sequencing reveals complex secondary metabolome in the marine actinomycete Salinispora tropica.</title>
        <authorList>
            <person name="Udwary D.W."/>
            <person name="Zeigler L."/>
            <person name="Asolkar R.N."/>
            <person name="Singan V."/>
            <person name="Lapidus A."/>
            <person name="Fenical W."/>
            <person name="Jensen P.R."/>
            <person name="Moore B.S."/>
        </authorList>
    </citation>
    <scope>NUCLEOTIDE SEQUENCE [LARGE SCALE GENOMIC DNA]</scope>
    <source>
        <strain>ATCC BAA-916 / DSM 44818 / JCM 13857 / NBRC 105044 / CNB-440</strain>
    </source>
</reference>
<accession>A4XAW6</accession>
<organism>
    <name type="scientific">Salinispora tropica (strain ATCC BAA-916 / DSM 44818 / JCM 13857 / NBRC 105044 / CNB-440)</name>
    <dbReference type="NCBI Taxonomy" id="369723"/>
    <lineage>
        <taxon>Bacteria</taxon>
        <taxon>Bacillati</taxon>
        <taxon>Actinomycetota</taxon>
        <taxon>Actinomycetes</taxon>
        <taxon>Micromonosporales</taxon>
        <taxon>Micromonosporaceae</taxon>
        <taxon>Salinispora</taxon>
    </lineage>
</organism>
<feature type="chain" id="PRO_0000368738" description="ATP synthase subunit b">
    <location>
        <begin position="1"/>
        <end position="175"/>
    </location>
</feature>
<feature type="transmembrane region" description="Helical" evidence="1">
    <location>
        <begin position="19"/>
        <end position="39"/>
    </location>
</feature>